<name>RS11_AERPE</name>
<evidence type="ECO:0000255" key="1">
    <source>
        <dbReference type="HAMAP-Rule" id="MF_01310"/>
    </source>
</evidence>
<evidence type="ECO:0000305" key="2"/>
<comment type="function">
    <text evidence="1">Located on the platform of the 30S subunit.</text>
</comment>
<comment type="subunit">
    <text evidence="1">Part of the 30S ribosomal subunit.</text>
</comment>
<comment type="similarity">
    <text evidence="1">Belongs to the universal ribosomal protein uS11 family.</text>
</comment>
<organism>
    <name type="scientific">Aeropyrum pernix (strain ATCC 700893 / DSM 11879 / JCM 9820 / NBRC 100138 / K1)</name>
    <dbReference type="NCBI Taxonomy" id="272557"/>
    <lineage>
        <taxon>Archaea</taxon>
        <taxon>Thermoproteota</taxon>
        <taxon>Thermoprotei</taxon>
        <taxon>Desulfurococcales</taxon>
        <taxon>Desulfurococcaceae</taxon>
        <taxon>Aeropyrum</taxon>
    </lineage>
</organism>
<keyword id="KW-1185">Reference proteome</keyword>
<keyword id="KW-0687">Ribonucleoprotein</keyword>
<keyword id="KW-0689">Ribosomal protein</keyword>
<keyword id="KW-0694">RNA-binding</keyword>
<keyword id="KW-0699">rRNA-binding</keyword>
<accession>Q9YB55</accession>
<dbReference type="EMBL" id="BA000002">
    <property type="protein sequence ID" value="BAA80743.2"/>
    <property type="molecule type" value="Genomic_DNA"/>
</dbReference>
<dbReference type="PIR" id="B72557">
    <property type="entry name" value="B72557"/>
</dbReference>
<dbReference type="SMR" id="Q9YB55"/>
<dbReference type="STRING" id="272557.APE_1742.1"/>
<dbReference type="EnsemblBacteria" id="BAA80743">
    <property type="protein sequence ID" value="BAA80743"/>
    <property type="gene ID" value="APE_1742.1"/>
</dbReference>
<dbReference type="KEGG" id="ape:APE_1742.1"/>
<dbReference type="PATRIC" id="fig|272557.25.peg.1171"/>
<dbReference type="eggNOG" id="arCOG04240">
    <property type="taxonomic scope" value="Archaea"/>
</dbReference>
<dbReference type="Proteomes" id="UP000002518">
    <property type="component" value="Chromosome"/>
</dbReference>
<dbReference type="GO" id="GO:1990904">
    <property type="term" value="C:ribonucleoprotein complex"/>
    <property type="evidence" value="ECO:0007669"/>
    <property type="project" value="UniProtKB-KW"/>
</dbReference>
<dbReference type="GO" id="GO:0005840">
    <property type="term" value="C:ribosome"/>
    <property type="evidence" value="ECO:0007669"/>
    <property type="project" value="UniProtKB-KW"/>
</dbReference>
<dbReference type="GO" id="GO:0019843">
    <property type="term" value="F:rRNA binding"/>
    <property type="evidence" value="ECO:0007669"/>
    <property type="project" value="UniProtKB-UniRule"/>
</dbReference>
<dbReference type="GO" id="GO:0003735">
    <property type="term" value="F:structural constituent of ribosome"/>
    <property type="evidence" value="ECO:0007669"/>
    <property type="project" value="InterPro"/>
</dbReference>
<dbReference type="GO" id="GO:0006412">
    <property type="term" value="P:translation"/>
    <property type="evidence" value="ECO:0007669"/>
    <property type="project" value="UniProtKB-UniRule"/>
</dbReference>
<dbReference type="FunFam" id="3.30.420.80:FF:000007">
    <property type="entry name" value="30S ribosomal protein S11"/>
    <property type="match status" value="1"/>
</dbReference>
<dbReference type="Gene3D" id="3.30.420.80">
    <property type="entry name" value="Ribosomal protein S11"/>
    <property type="match status" value="1"/>
</dbReference>
<dbReference type="HAMAP" id="MF_01310">
    <property type="entry name" value="Ribosomal_uS11"/>
    <property type="match status" value="1"/>
</dbReference>
<dbReference type="InterPro" id="IPR001971">
    <property type="entry name" value="Ribosomal_uS11"/>
</dbReference>
<dbReference type="InterPro" id="IPR019961">
    <property type="entry name" value="Ribosomal_uS11_archaeal"/>
</dbReference>
<dbReference type="InterPro" id="IPR018102">
    <property type="entry name" value="Ribosomal_uS11_CS"/>
</dbReference>
<dbReference type="InterPro" id="IPR036967">
    <property type="entry name" value="Ribosomal_uS11_sf"/>
</dbReference>
<dbReference type="NCBIfam" id="TIGR03628">
    <property type="entry name" value="arch_S11P"/>
    <property type="match status" value="1"/>
</dbReference>
<dbReference type="NCBIfam" id="NF007176">
    <property type="entry name" value="PRK09607.1"/>
    <property type="match status" value="1"/>
</dbReference>
<dbReference type="PANTHER" id="PTHR11759">
    <property type="entry name" value="40S RIBOSOMAL PROTEIN S14/30S RIBOSOMAL PROTEIN S11"/>
    <property type="match status" value="1"/>
</dbReference>
<dbReference type="Pfam" id="PF00411">
    <property type="entry name" value="Ribosomal_S11"/>
    <property type="match status" value="1"/>
</dbReference>
<dbReference type="PIRSF" id="PIRSF002131">
    <property type="entry name" value="Ribosomal_S11"/>
    <property type="match status" value="1"/>
</dbReference>
<dbReference type="SUPFAM" id="SSF53137">
    <property type="entry name" value="Translational machinery components"/>
    <property type="match status" value="1"/>
</dbReference>
<dbReference type="PROSITE" id="PS00054">
    <property type="entry name" value="RIBOSOMAL_S11"/>
    <property type="match status" value="1"/>
</dbReference>
<feature type="chain" id="PRO_0000123266" description="Small ribosomal subunit protein uS11">
    <location>
        <begin position="1"/>
        <end position="133"/>
    </location>
</feature>
<protein>
    <recommendedName>
        <fullName evidence="1">Small ribosomal subunit protein uS11</fullName>
    </recommendedName>
    <alternativeName>
        <fullName evidence="2">30S ribosomal protein S11</fullName>
    </alternativeName>
</protein>
<gene>
    <name evidence="1" type="primary">rps11</name>
    <name type="ordered locus">APE_1742.1</name>
</gene>
<sequence length="133" mass="14223">MAMYPRELKWGVAHIYSSFNNTHVHITDLTGAETVARVTGGMVVKADREKPSPYAAMIAASRAAQKAMERGIAAIHIKVRAPGGHGPKTPGPGAQAAIRALARAGFIIGRIEDVTPIPHDTTRRPGGRRGRRV</sequence>
<proteinExistence type="inferred from homology"/>
<reference key="1">
    <citation type="journal article" date="1999" name="DNA Res.">
        <title>Complete genome sequence of an aerobic hyper-thermophilic crenarchaeon, Aeropyrum pernix K1.</title>
        <authorList>
            <person name="Kawarabayasi Y."/>
            <person name="Hino Y."/>
            <person name="Horikawa H."/>
            <person name="Yamazaki S."/>
            <person name="Haikawa Y."/>
            <person name="Jin-no K."/>
            <person name="Takahashi M."/>
            <person name="Sekine M."/>
            <person name="Baba S."/>
            <person name="Ankai A."/>
            <person name="Kosugi H."/>
            <person name="Hosoyama A."/>
            <person name="Fukui S."/>
            <person name="Nagai Y."/>
            <person name="Nishijima K."/>
            <person name="Nakazawa H."/>
            <person name="Takamiya M."/>
            <person name="Masuda S."/>
            <person name="Funahashi T."/>
            <person name="Tanaka T."/>
            <person name="Kudoh Y."/>
            <person name="Yamazaki J."/>
            <person name="Kushida N."/>
            <person name="Oguchi A."/>
            <person name="Aoki K."/>
            <person name="Kubota K."/>
            <person name="Nakamura Y."/>
            <person name="Nomura N."/>
            <person name="Sako Y."/>
            <person name="Kikuchi H."/>
        </authorList>
    </citation>
    <scope>NUCLEOTIDE SEQUENCE [LARGE SCALE GENOMIC DNA]</scope>
    <source>
        <strain>ATCC 700893 / DSM 11879 / JCM 9820 / NBRC 100138 / K1</strain>
    </source>
</reference>